<proteinExistence type="evidence at transcript level"/>
<feature type="chain" id="PRO_0000052103" description="Cytochrome P450 71B26">
    <location>
        <begin position="1"/>
        <end position="500"/>
    </location>
</feature>
<feature type="transmembrane region" description="Helical" evidence="2">
    <location>
        <begin position="1"/>
        <end position="21"/>
    </location>
</feature>
<feature type="binding site" description="axial binding residue" evidence="1">
    <location>
        <position position="440"/>
    </location>
    <ligand>
        <name>heme</name>
        <dbReference type="ChEBI" id="CHEBI:30413"/>
    </ligand>
    <ligandPart>
        <name>Fe</name>
        <dbReference type="ChEBI" id="CHEBI:18248"/>
    </ligandPart>
</feature>
<gene>
    <name type="primary">CYP71B26</name>
    <name type="ordered locus">At3g26290</name>
    <name type="ORF">MTC11.22</name>
</gene>
<protein>
    <recommendedName>
        <fullName>Cytochrome P450 71B26</fullName>
        <ecNumber>1.14.-.-</ecNumber>
    </recommendedName>
</protein>
<keyword id="KW-0349">Heme</keyword>
<keyword id="KW-0408">Iron</keyword>
<keyword id="KW-0472">Membrane</keyword>
<keyword id="KW-0479">Metal-binding</keyword>
<keyword id="KW-0503">Monooxygenase</keyword>
<keyword id="KW-0560">Oxidoreductase</keyword>
<keyword id="KW-1185">Reference proteome</keyword>
<keyword id="KW-0812">Transmembrane</keyword>
<keyword id="KW-1133">Transmembrane helix</keyword>
<organism>
    <name type="scientific">Arabidopsis thaliana</name>
    <name type="common">Mouse-ear cress</name>
    <dbReference type="NCBI Taxonomy" id="3702"/>
    <lineage>
        <taxon>Eukaryota</taxon>
        <taxon>Viridiplantae</taxon>
        <taxon>Streptophyta</taxon>
        <taxon>Embryophyta</taxon>
        <taxon>Tracheophyta</taxon>
        <taxon>Spermatophyta</taxon>
        <taxon>Magnoliopsida</taxon>
        <taxon>eudicotyledons</taxon>
        <taxon>Gunneridae</taxon>
        <taxon>Pentapetalae</taxon>
        <taxon>rosids</taxon>
        <taxon>malvids</taxon>
        <taxon>Brassicales</taxon>
        <taxon>Brassicaceae</taxon>
        <taxon>Camelineae</taxon>
        <taxon>Arabidopsis</taxon>
    </lineage>
</organism>
<dbReference type="EC" id="1.14.-.-"/>
<dbReference type="EMBL" id="AB024038">
    <property type="protein sequence ID" value="BAB02452.1"/>
    <property type="molecule type" value="Genomic_DNA"/>
</dbReference>
<dbReference type="EMBL" id="CP002686">
    <property type="protein sequence ID" value="AEE77142.1"/>
    <property type="molecule type" value="Genomic_DNA"/>
</dbReference>
<dbReference type="EMBL" id="AY128393">
    <property type="protein sequence ID" value="AAM91596.1"/>
    <property type="molecule type" value="mRNA"/>
</dbReference>
<dbReference type="EMBL" id="BT008871">
    <property type="protein sequence ID" value="AAP68310.1"/>
    <property type="molecule type" value="mRNA"/>
</dbReference>
<dbReference type="RefSeq" id="NP_189260.1">
    <property type="nucleotide sequence ID" value="NM_113536.3"/>
</dbReference>
<dbReference type="SMR" id="Q9LTL0"/>
<dbReference type="FunCoup" id="Q9LTL0">
    <property type="interactions" value="502"/>
</dbReference>
<dbReference type="STRING" id="3702.Q9LTL0"/>
<dbReference type="iPTMnet" id="Q9LTL0"/>
<dbReference type="PaxDb" id="3702-AT3G26290.1"/>
<dbReference type="ProteomicsDB" id="240565"/>
<dbReference type="EnsemblPlants" id="AT3G26290.1">
    <property type="protein sequence ID" value="AT3G26290.1"/>
    <property type="gene ID" value="AT3G26290"/>
</dbReference>
<dbReference type="GeneID" id="822232"/>
<dbReference type="Gramene" id="AT3G26290.1">
    <property type="protein sequence ID" value="AT3G26290.1"/>
    <property type="gene ID" value="AT3G26290"/>
</dbReference>
<dbReference type="KEGG" id="ath:AT3G26290"/>
<dbReference type="Araport" id="AT3G26290"/>
<dbReference type="TAIR" id="AT3G26290">
    <property type="gene designation" value="CYP71B26"/>
</dbReference>
<dbReference type="eggNOG" id="KOG0156">
    <property type="taxonomic scope" value="Eukaryota"/>
</dbReference>
<dbReference type="HOGENOM" id="CLU_001570_4_1_1"/>
<dbReference type="InParanoid" id="Q9LTL0"/>
<dbReference type="PhylomeDB" id="Q9LTL0"/>
<dbReference type="PRO" id="PR:Q9LTL0"/>
<dbReference type="Proteomes" id="UP000006548">
    <property type="component" value="Chromosome 3"/>
</dbReference>
<dbReference type="ExpressionAtlas" id="Q9LTL0">
    <property type="expression patterns" value="baseline and differential"/>
</dbReference>
<dbReference type="GO" id="GO:0016020">
    <property type="term" value="C:membrane"/>
    <property type="evidence" value="ECO:0007669"/>
    <property type="project" value="UniProtKB-SubCell"/>
</dbReference>
<dbReference type="GO" id="GO:0020037">
    <property type="term" value="F:heme binding"/>
    <property type="evidence" value="ECO:0007669"/>
    <property type="project" value="InterPro"/>
</dbReference>
<dbReference type="GO" id="GO:0005506">
    <property type="term" value="F:iron ion binding"/>
    <property type="evidence" value="ECO:0007669"/>
    <property type="project" value="InterPro"/>
</dbReference>
<dbReference type="GO" id="GO:0004497">
    <property type="term" value="F:monooxygenase activity"/>
    <property type="evidence" value="ECO:0007669"/>
    <property type="project" value="UniProtKB-KW"/>
</dbReference>
<dbReference type="GO" id="GO:0016705">
    <property type="term" value="F:oxidoreductase activity, acting on paired donors, with incorporation or reduction of molecular oxygen"/>
    <property type="evidence" value="ECO:0007669"/>
    <property type="project" value="InterPro"/>
</dbReference>
<dbReference type="CDD" id="cd11072">
    <property type="entry name" value="CYP71-like"/>
    <property type="match status" value="1"/>
</dbReference>
<dbReference type="FunFam" id="1.10.630.10:FF:000011">
    <property type="entry name" value="Cytochrome P450 83B1"/>
    <property type="match status" value="1"/>
</dbReference>
<dbReference type="Gene3D" id="1.10.630.10">
    <property type="entry name" value="Cytochrome P450"/>
    <property type="match status" value="1"/>
</dbReference>
<dbReference type="InterPro" id="IPR001128">
    <property type="entry name" value="Cyt_P450"/>
</dbReference>
<dbReference type="InterPro" id="IPR017972">
    <property type="entry name" value="Cyt_P450_CS"/>
</dbReference>
<dbReference type="InterPro" id="IPR002401">
    <property type="entry name" value="Cyt_P450_E_grp-I"/>
</dbReference>
<dbReference type="InterPro" id="IPR036396">
    <property type="entry name" value="Cyt_P450_sf"/>
</dbReference>
<dbReference type="PANTHER" id="PTHR47955:SF19">
    <property type="entry name" value="CYTOCHROME P450 71A9-LIKE ISOFORM X1"/>
    <property type="match status" value="1"/>
</dbReference>
<dbReference type="PANTHER" id="PTHR47955">
    <property type="entry name" value="CYTOCHROME P450 FAMILY 71 PROTEIN"/>
    <property type="match status" value="1"/>
</dbReference>
<dbReference type="Pfam" id="PF00067">
    <property type="entry name" value="p450"/>
    <property type="match status" value="1"/>
</dbReference>
<dbReference type="PRINTS" id="PR00463">
    <property type="entry name" value="EP450I"/>
</dbReference>
<dbReference type="PRINTS" id="PR00385">
    <property type="entry name" value="P450"/>
</dbReference>
<dbReference type="SUPFAM" id="SSF48264">
    <property type="entry name" value="Cytochrome P450"/>
    <property type="match status" value="1"/>
</dbReference>
<dbReference type="PROSITE" id="PS00086">
    <property type="entry name" value="CYTOCHROME_P450"/>
    <property type="match status" value="1"/>
</dbReference>
<accession>Q9LTL0</accession>
<sequence>MDSIWILSLLFFIIFLLLAAFKRKNHGKHRRIPSPPGFPIIGNLHQLGELQHQSLWKLSKKYGPVMLLKLGKVPTLILSSSETAKQALRDYDLHCCSRPSLAGGRELSYNNLDMSSSPYNEYWKELRKLCSQELFSANKIQSIQPIKDEEVKKVIDSIAESSSLKNPVNLSKTFLALTTSVVCKAAFGVSFEGSVLNSDRFNKLVRDTFEMLGSFSASDFIPYVGWIIDKFNGLQGWRKKSFRDLDAFYEQIFDLHKEEKEVGSEDLVDVLLRLEKEEIVVGNGKLTRNHIKAILMNILLGGIDTSAITMTWAMAELAKNPRVMKKVQAEIRNQIKNKERISFDDTDKLEYLKMVIKETWRLHPPTPLLLPRDVITEFEINGYTIPAKTRLHVNVWAIGRDPDTWKDPEMFLPERFNDSNIDAKGQNFELLSFGSGRRICPGLYMGTTMVEFGLANMLYHFDWKLPEGMVVEDIDMEEAPGLTVSKKSELVLVPVKYLDH</sequence>
<evidence type="ECO:0000250" key="1"/>
<evidence type="ECO:0000255" key="2"/>
<evidence type="ECO:0000305" key="3"/>
<name>C71BQ_ARATH</name>
<comment type="cofactor">
    <cofactor evidence="1">
        <name>heme</name>
        <dbReference type="ChEBI" id="CHEBI:30413"/>
    </cofactor>
</comment>
<comment type="subcellular location">
    <subcellularLocation>
        <location evidence="3">Membrane</location>
        <topology evidence="3">Single-pass membrane protein</topology>
    </subcellularLocation>
</comment>
<comment type="similarity">
    <text evidence="3">Belongs to the cytochrome P450 family.</text>
</comment>
<reference key="1">
    <citation type="journal article" date="2000" name="DNA Res.">
        <title>Structural analysis of Arabidopsis thaliana chromosome 3. I. Sequence features of the regions of 4,504,864 bp covered by sixty P1 and TAC clones.</title>
        <authorList>
            <person name="Sato S."/>
            <person name="Nakamura Y."/>
            <person name="Kaneko T."/>
            <person name="Katoh T."/>
            <person name="Asamizu E."/>
            <person name="Tabata S."/>
        </authorList>
    </citation>
    <scope>NUCLEOTIDE SEQUENCE [LARGE SCALE GENOMIC DNA]</scope>
    <source>
        <strain>cv. Columbia</strain>
    </source>
</reference>
<reference key="2">
    <citation type="journal article" date="2017" name="Plant J.">
        <title>Araport11: a complete reannotation of the Arabidopsis thaliana reference genome.</title>
        <authorList>
            <person name="Cheng C.Y."/>
            <person name="Krishnakumar V."/>
            <person name="Chan A.P."/>
            <person name="Thibaud-Nissen F."/>
            <person name="Schobel S."/>
            <person name="Town C.D."/>
        </authorList>
    </citation>
    <scope>GENOME REANNOTATION</scope>
    <source>
        <strain>cv. Columbia</strain>
    </source>
</reference>
<reference key="3">
    <citation type="journal article" date="2003" name="Science">
        <title>Empirical analysis of transcriptional activity in the Arabidopsis genome.</title>
        <authorList>
            <person name="Yamada K."/>
            <person name="Lim J."/>
            <person name="Dale J.M."/>
            <person name="Chen H."/>
            <person name="Shinn P."/>
            <person name="Palm C.J."/>
            <person name="Southwick A.M."/>
            <person name="Wu H.C."/>
            <person name="Kim C.J."/>
            <person name="Nguyen M."/>
            <person name="Pham P.K."/>
            <person name="Cheuk R.F."/>
            <person name="Karlin-Newmann G."/>
            <person name="Liu S.X."/>
            <person name="Lam B."/>
            <person name="Sakano H."/>
            <person name="Wu T."/>
            <person name="Yu G."/>
            <person name="Miranda M."/>
            <person name="Quach H.L."/>
            <person name="Tripp M."/>
            <person name="Chang C.H."/>
            <person name="Lee J.M."/>
            <person name="Toriumi M.J."/>
            <person name="Chan M.M."/>
            <person name="Tang C.C."/>
            <person name="Onodera C.S."/>
            <person name="Deng J.M."/>
            <person name="Akiyama K."/>
            <person name="Ansari Y."/>
            <person name="Arakawa T."/>
            <person name="Banh J."/>
            <person name="Banno F."/>
            <person name="Bowser L."/>
            <person name="Brooks S.Y."/>
            <person name="Carninci P."/>
            <person name="Chao Q."/>
            <person name="Choy N."/>
            <person name="Enju A."/>
            <person name="Goldsmith A.D."/>
            <person name="Gurjal M."/>
            <person name="Hansen N.F."/>
            <person name="Hayashizaki Y."/>
            <person name="Johnson-Hopson C."/>
            <person name="Hsuan V.W."/>
            <person name="Iida K."/>
            <person name="Karnes M."/>
            <person name="Khan S."/>
            <person name="Koesema E."/>
            <person name="Ishida J."/>
            <person name="Jiang P.X."/>
            <person name="Jones T."/>
            <person name="Kawai J."/>
            <person name="Kamiya A."/>
            <person name="Meyers C."/>
            <person name="Nakajima M."/>
            <person name="Narusaka M."/>
            <person name="Seki M."/>
            <person name="Sakurai T."/>
            <person name="Satou M."/>
            <person name="Tamse R."/>
            <person name="Vaysberg M."/>
            <person name="Wallender E.K."/>
            <person name="Wong C."/>
            <person name="Yamamura Y."/>
            <person name="Yuan S."/>
            <person name="Shinozaki K."/>
            <person name="Davis R.W."/>
            <person name="Theologis A."/>
            <person name="Ecker J.R."/>
        </authorList>
    </citation>
    <scope>NUCLEOTIDE SEQUENCE [LARGE SCALE MRNA]</scope>
    <source>
        <strain>cv. Columbia</strain>
    </source>
</reference>